<evidence type="ECO:0000250" key="1">
    <source>
        <dbReference type="UniProtKB" id="E9PV24"/>
    </source>
</evidence>
<evidence type="ECO:0000250" key="2">
    <source>
        <dbReference type="UniProtKB" id="P02671"/>
    </source>
</evidence>
<organism>
    <name type="scientific">Rangifer tarandus</name>
    <name type="common">Reindeer</name>
    <name type="synonym">Cervus tarandus</name>
    <dbReference type="NCBI Taxonomy" id="9870"/>
    <lineage>
        <taxon>Eukaryota</taxon>
        <taxon>Metazoa</taxon>
        <taxon>Chordata</taxon>
        <taxon>Craniata</taxon>
        <taxon>Vertebrata</taxon>
        <taxon>Euteleostomi</taxon>
        <taxon>Mammalia</taxon>
        <taxon>Eutheria</taxon>
        <taxon>Laurasiatheria</taxon>
        <taxon>Artiodactyla</taxon>
        <taxon>Ruminantia</taxon>
        <taxon>Pecora</taxon>
        <taxon>Cervidae</taxon>
        <taxon>Odocoileinae</taxon>
        <taxon>Rangifer</taxon>
    </lineage>
</organism>
<protein>
    <recommendedName>
        <fullName>Fibrinogen alpha chain</fullName>
    </recommendedName>
    <component>
        <recommendedName>
            <fullName>Fibrinopeptide A</fullName>
        </recommendedName>
    </component>
</protein>
<name>FIBA_RANTA</name>
<gene>
    <name type="primary">FGA</name>
</gene>
<feature type="peptide" id="PRO_0000009048" description="Fibrinopeptide A">
    <location>
        <begin position="1"/>
        <end position="19"/>
    </location>
</feature>
<feature type="non-terminal residue">
    <location>
        <position position="19"/>
    </location>
</feature>
<sequence length="19" mass="1762">ADGSDPAGGEFLEAGGGVR</sequence>
<reference key="1">
    <citation type="journal article" date="1965" name="Acta Chem. Scand.">
        <title>Studies on fibrinopeptides from mammals.</title>
        <authorList>
            <person name="Blombaeck B."/>
            <person name="Blombaeck M."/>
            <person name="Grondahl N.J."/>
        </authorList>
    </citation>
    <scope>PROTEIN SEQUENCE</scope>
</reference>
<proteinExistence type="evidence at protein level"/>
<accession>P14462</accession>
<comment type="function">
    <text evidence="1">Cleaved by the protease thrombin to yield monomers which, together with fibrinogen beta (FGB) and fibrinogen gamma (FGG), polymerize to form an insoluble fibrin matrix. Fibrin has a major function in hemostasis as one of the primary components of blood clots. In addition, functions during the early stages of wound repair to stabilize the lesion and guide cell migration during re-epithelialization. Was originally thought to be essential for platelet aggregation, based on in vitro studies using anticoagulated blood. However, subsequent studies have shown that it is not absolutely required for thrombus formation in vivo. Enhances expression of SELP in activated platelets via an ITGB3-dependent pathway. Maternal fibrinogen is essential for successful pregnancy. Fibrin deposition is also associated with infection, where it protects against IFNG-mediated hemorrhage. May also facilitate the immune response via both innate and T-cell mediated pathways.</text>
</comment>
<comment type="subunit">
    <text evidence="2">Heterohexamer; disulfide linked. Contains 2 sets of 3 non-identical chains (alpha, beta and gamma). The 2 heterotrimers are in head to head conformation with the N-termini in a small central domain (By similarity).</text>
</comment>
<comment type="subcellular location">
    <subcellularLocation>
        <location>Secreted</location>
    </subcellularLocation>
</comment>
<comment type="domain">
    <text evidence="2">A long coiled coil structure formed by 3 polypeptide chains connects the central nodule to the C-terminal domains (distal nodules). The long C-terminal ends of the alpha chains fold back, contributing a fourth strand to the coiled coil structure.</text>
</comment>
<comment type="PTM">
    <text>Conversion of fibrinogen to fibrin is triggered by thrombin, which cleaves fibrinopeptides A and B from alpha and beta chains, and thus exposes the N-terminal polymerization sites responsible for the formation of the soft clot. The soft clot is converted into the hard clot by factor XIIIA which catalyzes the epsilon-(gamma-glutamyl)lysine cross-linking between gamma chains (stronger) and between alpha chains (weaker) of different monomers.</text>
</comment>
<comment type="PTM">
    <text>Forms F13A-mediated cross-links between a glutamine and the epsilon-amino group of a lysine residue, forming fibronectin-fibrinogen heteropolymers.</text>
</comment>
<dbReference type="GO" id="GO:0005576">
    <property type="term" value="C:extracellular region"/>
    <property type="evidence" value="ECO:0007669"/>
    <property type="project" value="UniProtKB-SubCell"/>
</dbReference>
<dbReference type="GO" id="GO:0002250">
    <property type="term" value="P:adaptive immune response"/>
    <property type="evidence" value="ECO:0007669"/>
    <property type="project" value="UniProtKB-KW"/>
</dbReference>
<dbReference type="GO" id="GO:0007596">
    <property type="term" value="P:blood coagulation"/>
    <property type="evidence" value="ECO:0007669"/>
    <property type="project" value="UniProtKB-KW"/>
</dbReference>
<dbReference type="GO" id="GO:0045087">
    <property type="term" value="P:innate immune response"/>
    <property type="evidence" value="ECO:0007669"/>
    <property type="project" value="UniProtKB-KW"/>
</dbReference>
<keyword id="KW-1064">Adaptive immunity</keyword>
<keyword id="KW-0094">Blood coagulation</keyword>
<keyword id="KW-0175">Coiled coil</keyword>
<keyword id="KW-0903">Direct protein sequencing</keyword>
<keyword id="KW-1015">Disulfide bond</keyword>
<keyword id="KW-0356">Hemostasis</keyword>
<keyword id="KW-0391">Immunity</keyword>
<keyword id="KW-0399">Innate immunity</keyword>
<keyword id="KW-0964">Secreted</keyword>